<proteinExistence type="evidence at protein level"/>
<organism>
    <name type="scientific">Homo sapiens</name>
    <name type="common">Human</name>
    <dbReference type="NCBI Taxonomy" id="9606"/>
    <lineage>
        <taxon>Eukaryota</taxon>
        <taxon>Metazoa</taxon>
        <taxon>Chordata</taxon>
        <taxon>Craniata</taxon>
        <taxon>Vertebrata</taxon>
        <taxon>Euteleostomi</taxon>
        <taxon>Mammalia</taxon>
        <taxon>Eutheria</taxon>
        <taxon>Euarchontoglires</taxon>
        <taxon>Primates</taxon>
        <taxon>Haplorrhini</taxon>
        <taxon>Catarrhini</taxon>
        <taxon>Hominidae</taxon>
        <taxon>Homo</taxon>
    </lineage>
</organism>
<feature type="chain" id="PRO_0000125355" description="Kinesin heavy chain isoform 5C">
    <location>
        <begin position="1"/>
        <end position="957"/>
    </location>
</feature>
<feature type="domain" description="Kinesin motor" evidence="3">
    <location>
        <begin position="8"/>
        <end position="327"/>
    </location>
</feature>
<feature type="region of interest" description="Microtubule-binding">
    <location>
        <begin position="174"/>
        <end position="315"/>
    </location>
</feature>
<feature type="region of interest" description="Globular">
    <location>
        <begin position="859"/>
        <end position="956"/>
    </location>
</feature>
<feature type="region of interest" description="Disordered" evidence="4">
    <location>
        <begin position="911"/>
        <end position="957"/>
    </location>
</feature>
<feature type="coiled-coil region">
    <location>
        <begin position="406"/>
        <end position="923"/>
    </location>
</feature>
<feature type="binding site" evidence="2">
    <location>
        <position position="87"/>
    </location>
    <ligand>
        <name>ATP</name>
        <dbReference type="ChEBI" id="CHEBI:30616"/>
    </ligand>
</feature>
<feature type="binding site" evidence="2">
    <location>
        <position position="89"/>
    </location>
    <ligand>
        <name>ATP</name>
        <dbReference type="ChEBI" id="CHEBI:30616"/>
    </ligand>
</feature>
<feature type="binding site" evidence="2">
    <location>
        <position position="90"/>
    </location>
    <ligand>
        <name>ATP</name>
        <dbReference type="ChEBI" id="CHEBI:30616"/>
    </ligand>
</feature>
<feature type="binding site" evidence="2">
    <location>
        <position position="91"/>
    </location>
    <ligand>
        <name>ATP</name>
        <dbReference type="ChEBI" id="CHEBI:30616"/>
    </ligand>
</feature>
<feature type="binding site" evidence="2">
    <location>
        <position position="92"/>
    </location>
    <ligand>
        <name>ATP</name>
        <dbReference type="ChEBI" id="CHEBI:30616"/>
    </ligand>
</feature>
<feature type="binding site" evidence="2">
    <location>
        <position position="93"/>
    </location>
    <ligand>
        <name>ATP</name>
        <dbReference type="ChEBI" id="CHEBI:30616"/>
    </ligand>
</feature>
<feature type="binding site" evidence="2">
    <location>
        <position position="94"/>
    </location>
    <ligand>
        <name>ATP</name>
        <dbReference type="ChEBI" id="CHEBI:30616"/>
    </ligand>
</feature>
<feature type="binding site" evidence="2">
    <location>
        <position position="99"/>
    </location>
    <ligand>
        <name>ATP</name>
        <dbReference type="ChEBI" id="CHEBI:30616"/>
    </ligand>
</feature>
<feature type="splice variant" id="VSP_035715" description="In isoform 2." evidence="10">
    <location>
        <begin position="1"/>
        <end position="232"/>
    </location>
</feature>
<feature type="splice variant" id="VSP_035716" description="In isoform 2." evidence="10">
    <original>LAGSEK</original>
    <variation>MATYIH</variation>
    <location>
        <begin position="233"/>
        <end position="238"/>
    </location>
</feature>
<feature type="sequence variant" id="VAR_069389" description="In CDCBM2; the mutation results in a significant decrease of excitatory post-synaptic currents when expressed in cultured primary hippocampal neurons; decreased localization to distal regions of dendrites; accumulates in dendrite cell body; dbSNP:rs587777570." evidence="6 8 9">
    <original>E</original>
    <variation>K</variation>
    <location>
        <position position="237"/>
    </location>
</feature>
<feature type="sequence variant" id="VAR_070574" description="In CDCBM2; the mutant protein has a complete loss of ATP hydrolysis activity; colocalizes with microtubules throughout the cell but does not appear as puncta or accumulates in cortical clusters as does the wild-type protein; dbSNP:rs587777035." evidence="7">
    <original>E</original>
    <variation>V</variation>
    <location>
        <position position="237"/>
    </location>
</feature>
<feature type="sequence conflict" description="In Ref. 4; AAD01436." evidence="11" ref="4">
    <original>TLKNVI</original>
    <variation>STHASV</variation>
    <location>
        <begin position="355"/>
        <end position="360"/>
    </location>
</feature>
<feature type="sequence conflict" description="In Ref. 4; AAD01436." evidence="11" ref="4">
    <original>EFT</original>
    <variation>DRV</variation>
    <location>
        <begin position="583"/>
        <end position="585"/>
    </location>
</feature>
<evidence type="ECO:0000250" key="1">
    <source>
        <dbReference type="UniProtKB" id="P28738"/>
    </source>
</evidence>
<evidence type="ECO:0000250" key="2">
    <source>
        <dbReference type="UniProtKB" id="P56536"/>
    </source>
</evidence>
<evidence type="ECO:0000255" key="3">
    <source>
        <dbReference type="PROSITE-ProRule" id="PRU00283"/>
    </source>
</evidence>
<evidence type="ECO:0000256" key="4">
    <source>
        <dbReference type="SAM" id="MobiDB-lite"/>
    </source>
</evidence>
<evidence type="ECO:0000269" key="5">
    <source>
    </source>
</evidence>
<evidence type="ECO:0000269" key="6">
    <source>
    </source>
</evidence>
<evidence type="ECO:0000269" key="7">
    <source>
    </source>
</evidence>
<evidence type="ECO:0000269" key="8">
    <source>
    </source>
</evidence>
<evidence type="ECO:0000269" key="9">
    <source>
    </source>
</evidence>
<evidence type="ECO:0000303" key="10">
    <source>
    </source>
</evidence>
<evidence type="ECO:0000305" key="11"/>
<protein>
    <recommendedName>
        <fullName>Kinesin heavy chain isoform 5C</fullName>
        <ecNumber evidence="2">3.6.4.-</ecNumber>
    </recommendedName>
    <alternativeName>
        <fullName>Kinesin heavy chain neuron-specific 2</fullName>
    </alternativeName>
    <alternativeName>
        <fullName evidence="2">Kinesin-1</fullName>
    </alternativeName>
</protein>
<reference key="1">
    <citation type="journal article" date="1998" name="DNA Res.">
        <title>Prediction of the coding sequences of unidentified human genes. IX. The complete sequences of 100 new cDNA clones from brain which can code for large proteins in vitro.</title>
        <authorList>
            <person name="Nagase T."/>
            <person name="Ishikawa K."/>
            <person name="Miyajima N."/>
            <person name="Tanaka A."/>
            <person name="Kotani H."/>
            <person name="Nomura N."/>
            <person name="Ohara O."/>
        </authorList>
    </citation>
    <scope>NUCLEOTIDE SEQUENCE [LARGE SCALE MRNA] (ISOFORM 1)</scope>
    <source>
        <tissue>Brain</tissue>
    </source>
</reference>
<reference key="2">
    <citation type="journal article" date="2005" name="Nature">
        <title>Generation and annotation of the DNA sequences of human chromosomes 2 and 4.</title>
        <authorList>
            <person name="Hillier L.W."/>
            <person name="Graves T.A."/>
            <person name="Fulton R.S."/>
            <person name="Fulton L.A."/>
            <person name="Pepin K.H."/>
            <person name="Minx P."/>
            <person name="Wagner-McPherson C."/>
            <person name="Layman D."/>
            <person name="Wylie K."/>
            <person name="Sekhon M."/>
            <person name="Becker M.C."/>
            <person name="Fewell G.A."/>
            <person name="Delehaunty K.D."/>
            <person name="Miner T.L."/>
            <person name="Nash W.E."/>
            <person name="Kremitzki C."/>
            <person name="Oddy L."/>
            <person name="Du H."/>
            <person name="Sun H."/>
            <person name="Bradshaw-Cordum H."/>
            <person name="Ali J."/>
            <person name="Carter J."/>
            <person name="Cordes M."/>
            <person name="Harris A."/>
            <person name="Isak A."/>
            <person name="van Brunt A."/>
            <person name="Nguyen C."/>
            <person name="Du F."/>
            <person name="Courtney L."/>
            <person name="Kalicki J."/>
            <person name="Ozersky P."/>
            <person name="Abbott S."/>
            <person name="Armstrong J."/>
            <person name="Belter E.A."/>
            <person name="Caruso L."/>
            <person name="Cedroni M."/>
            <person name="Cotton M."/>
            <person name="Davidson T."/>
            <person name="Desai A."/>
            <person name="Elliott G."/>
            <person name="Erb T."/>
            <person name="Fronick C."/>
            <person name="Gaige T."/>
            <person name="Haakenson W."/>
            <person name="Haglund K."/>
            <person name="Holmes A."/>
            <person name="Harkins R."/>
            <person name="Kim K."/>
            <person name="Kruchowski S.S."/>
            <person name="Strong C.M."/>
            <person name="Grewal N."/>
            <person name="Goyea E."/>
            <person name="Hou S."/>
            <person name="Levy A."/>
            <person name="Martinka S."/>
            <person name="Mead K."/>
            <person name="McLellan M.D."/>
            <person name="Meyer R."/>
            <person name="Randall-Maher J."/>
            <person name="Tomlinson C."/>
            <person name="Dauphin-Kohlberg S."/>
            <person name="Kozlowicz-Reilly A."/>
            <person name="Shah N."/>
            <person name="Swearengen-Shahid S."/>
            <person name="Snider J."/>
            <person name="Strong J.T."/>
            <person name="Thompson J."/>
            <person name="Yoakum M."/>
            <person name="Leonard S."/>
            <person name="Pearman C."/>
            <person name="Trani L."/>
            <person name="Radionenko M."/>
            <person name="Waligorski J.E."/>
            <person name="Wang C."/>
            <person name="Rock S.M."/>
            <person name="Tin-Wollam A.-M."/>
            <person name="Maupin R."/>
            <person name="Latreille P."/>
            <person name="Wendl M.C."/>
            <person name="Yang S.-P."/>
            <person name="Pohl C."/>
            <person name="Wallis J.W."/>
            <person name="Spieth J."/>
            <person name="Bieri T.A."/>
            <person name="Berkowicz N."/>
            <person name="Nelson J.O."/>
            <person name="Osborne J."/>
            <person name="Ding L."/>
            <person name="Meyer R."/>
            <person name="Sabo A."/>
            <person name="Shotland Y."/>
            <person name="Sinha P."/>
            <person name="Wohldmann P.E."/>
            <person name="Cook L.L."/>
            <person name="Hickenbotham M.T."/>
            <person name="Eldred J."/>
            <person name="Williams D."/>
            <person name="Jones T.A."/>
            <person name="She X."/>
            <person name="Ciccarelli F.D."/>
            <person name="Izaurralde E."/>
            <person name="Taylor J."/>
            <person name="Schmutz J."/>
            <person name="Myers R.M."/>
            <person name="Cox D.R."/>
            <person name="Huang X."/>
            <person name="McPherson J.D."/>
            <person name="Mardis E.R."/>
            <person name="Clifton S.W."/>
            <person name="Warren W.C."/>
            <person name="Chinwalla A.T."/>
            <person name="Eddy S.R."/>
            <person name="Marra M.A."/>
            <person name="Ovcharenko I."/>
            <person name="Furey T.S."/>
            <person name="Miller W."/>
            <person name="Eichler E.E."/>
            <person name="Bork P."/>
            <person name="Suyama M."/>
            <person name="Torrents D."/>
            <person name="Waterston R.H."/>
            <person name="Wilson R.K."/>
        </authorList>
    </citation>
    <scope>NUCLEOTIDE SEQUENCE [LARGE SCALE GENOMIC DNA]</scope>
</reference>
<reference key="3">
    <citation type="journal article" date="2004" name="Genome Res.">
        <title>The status, quality, and expansion of the NIH full-length cDNA project: the Mammalian Gene Collection (MGC).</title>
        <authorList>
            <consortium name="The MGC Project Team"/>
        </authorList>
    </citation>
    <scope>NUCLEOTIDE SEQUENCE [LARGE SCALE MRNA] (ISOFORM 2)</scope>
    <source>
        <tissue>Brain</tissue>
    </source>
</reference>
<reference key="4">
    <citation type="journal article" date="1997" name="Hum. Mol. Genet.">
        <title>Huntingtin-associated protein 1 (HAP1) interacts with the p150Glued subunit of dynactin.</title>
        <authorList>
            <person name="Engelender S."/>
            <person name="Sharp A.H."/>
            <person name="Colomer V."/>
            <person name="Tokito M.K."/>
            <person name="Lanahan A."/>
            <person name="Worley P."/>
            <person name="Holzbaur E.L.F."/>
            <person name="Ross C.A."/>
        </authorList>
    </citation>
    <scope>NUCLEOTIDE SEQUENCE [MRNA] OF 355-585 (ISOFORMS 1/2)</scope>
</reference>
<reference key="5">
    <citation type="journal article" date="2005" name="J. Biol. Chem.">
        <title>GRIF-1 and OIP106, members of a novel gene family of coiled-coil domain proteins: association in vivo and in vitro with kinesin.</title>
        <authorList>
            <person name="Brickley K."/>
            <person name="Smith M.J."/>
            <person name="Beck M."/>
            <person name="Stephenson F.A."/>
        </authorList>
    </citation>
    <scope>INTERACTION WITH TRAK1</scope>
</reference>
<reference key="6">
    <citation type="journal article" date="2011" name="BMC Syst. Biol.">
        <title>Initial characterization of the human central proteome.</title>
        <authorList>
            <person name="Burkard T.R."/>
            <person name="Planyavsky M."/>
            <person name="Kaupe I."/>
            <person name="Breitwieser F.P."/>
            <person name="Buerckstuemmer T."/>
            <person name="Bennett K.L."/>
            <person name="Superti-Furga G."/>
            <person name="Colinge J."/>
        </authorList>
    </citation>
    <scope>IDENTIFICATION BY MASS SPECTROMETRY [LARGE SCALE ANALYSIS]</scope>
</reference>
<reference key="7">
    <citation type="journal article" date="2014" name="J. Med. Genet.">
        <title>Involvement of the kinesin family members KIF4A and KIF5C in intellectual disability and synaptic function.</title>
        <authorList>
            <person name="Willemsen M.H."/>
            <person name="Ba W."/>
            <person name="Wissink-Lindhout W.M."/>
            <person name="de Brouwer A.P."/>
            <person name="Haas S.A."/>
            <person name="Bienek M."/>
            <person name="Hu H."/>
            <person name="Vissers L.E."/>
            <person name="van Bokhoven H."/>
            <person name="Kalscheuer V."/>
            <person name="Nadif Kasri N."/>
            <person name="Kleefstra T."/>
        </authorList>
    </citation>
    <scope>FUNCTION</scope>
    <scope>SUBCELLULAR LOCATION</scope>
    <scope>VARIANT CDCBM2 LYS-237</scope>
    <scope>CHARACTERIZATION OF VARIANT CDCBM2 LYS-237</scope>
</reference>
<reference key="8">
    <citation type="journal article" date="2012" name="N. Engl. J. Med.">
        <title>Diagnostic exome sequencing in persons with severe intellectual disability.</title>
        <authorList>
            <person name="de Ligt J."/>
            <person name="Willemsen M.H."/>
            <person name="van Bon B.W."/>
            <person name="Kleefstra T."/>
            <person name="Yntema H.G."/>
            <person name="Kroes T."/>
            <person name="Vulto-van Silfhout A.T."/>
            <person name="Koolen D.A."/>
            <person name="de Vries P."/>
            <person name="Gilissen C."/>
            <person name="del Rosario M."/>
            <person name="Hoischen A."/>
            <person name="Scheffer H."/>
            <person name="de Vries B.B."/>
            <person name="Brunner H.G."/>
            <person name="Veltman J.A."/>
            <person name="Vissers L.E."/>
        </authorList>
    </citation>
    <scope>VARIANT CDCBM2 LYS-237</scope>
</reference>
<reference key="9">
    <citation type="journal article" date="2013" name="Nat. Genet.">
        <title>Mutations in TUBG1, DYNC1H1, KIF5C and KIF2A cause malformations of cortical development and microcephaly.</title>
        <authorList>
            <person name="Poirier K."/>
            <person name="Lebrun N."/>
            <person name="Broix L."/>
            <person name="Tian G."/>
            <person name="Saillour Y."/>
            <person name="Boscheron C."/>
            <person name="Parrini E."/>
            <person name="Valence S."/>
            <person name="Pierre B.S."/>
            <person name="Oger M."/>
            <person name="Lacombe D."/>
            <person name="Genevieve D."/>
            <person name="Fontana E."/>
            <person name="Darra F."/>
            <person name="Cances C."/>
            <person name="Barth M."/>
            <person name="Bonneau D."/>
            <person name="Bernadina B.D."/>
            <person name="N'guyen S."/>
            <person name="Gitiaux C."/>
            <person name="Parent P."/>
            <person name="des Portes V."/>
            <person name="Pedespan J.M."/>
            <person name="Legrez V."/>
            <person name="Castelnau-Ptakine L."/>
            <person name="Nitschke P."/>
            <person name="Hieu T."/>
            <person name="Masson C."/>
            <person name="Zelenika D."/>
            <person name="Andrieux A."/>
            <person name="Francis F."/>
            <person name="Guerrini R."/>
            <person name="Cowan N.J."/>
            <person name="Bahi-Buisson N."/>
            <person name="Chelly J."/>
        </authorList>
    </citation>
    <scope>VARIANT CDCBM2 VAL-237</scope>
    <scope>CHARACTERIZATION OF VARIANT CDCBM2 VAL-237</scope>
</reference>
<reference key="10">
    <citation type="journal article" date="2017" name="Am. J. Med. Genet. A">
        <title>Mutations of KIF5C cause a neurodevelopmental disorder of infantile-onset epilepsy, absent language, and distinctive malformations of cortical development.</title>
        <authorList>
            <person name="Michels S."/>
            <person name="Foss K."/>
            <person name="Park K."/>
            <person name="Golden-Grant K."/>
            <person name="Saneto R."/>
            <person name="Lopez J."/>
            <person name="Mirzaa G.M."/>
        </authorList>
    </citation>
    <scope>VARIANT CDCBM2 LYS-237</scope>
</reference>
<sequence length="957" mass="109495">MADPAECSIKVMCRFRPLNEAEILRGDKFIPKFKGDETVVIGQGKPYVFDRVLPPNTTQEQVYNACAKQIVKDVLEGYNGTIFAYGQTSSGKTHTMEGKLHDPQLMGIIPRIAHDIFDHIYSMDENLEFHIKVSYFEIYLDKIRDLLDVSKTNLAVHEDKNRVPYVKGCTERFVSSPEEVMDVIDEGKANRHVAVTNMNEHSSRSHSIFLINIKQENVETEKKLSGKLYLVDLAGSEKVSKTGAEGAVLDEAKNINKSLSALGNVISALAEGTKTHVPYRDSKMTRILQDSLGGNCRTTIVICCSPSVFNEAETKSTLMFGQRAKTIKNTVSVNLELTAEEWKKKYEKEKEKNKTLKNVIQHLEMELNRWRNGEAVPEDEQISAKDQKNLEPCDNTPIIDNIAPVVAGISTEEKEKYDEEISSLYRQLDDKDDEINQQSQLAEKLKQQMLDQDELLASTRRDYEKIQEELTRLQIENEAAKDEVKEVLQALEELAVNYDQKSQEVEDKTRANEQLTDELAQKTTTLTTTQRELSQLQELSNHQKKRATEILNLLLKDLGEIGGIIGTNDVKTLADVNGVIEEEFTMARLYISKMKSEVKSLVNRSKQLESAQMDSNRKMNASERELAACQLLISQHEAKIKSLTDYMQNMEQKRRQLEESQDSLSEELAKLRAQEKMHEVSFQDKEKEHLTRLQDAEEMKKALEQQMESHREAHQKQLSRLRDEIEEKQKIIDEIRDLNQKLQLEQEKLSSDYNKLKIEDQEREMKLEKLLLLNDKREQAREDLKGLEETVSRELQTLHNLRKLFVQDLTTRVKKSVELDNDDGGGSAAQKQKISFLENNLEQLTKVHKQLVRDNADLRCELPKLEKRLRATAERVKALESALKEAKENAMRDRKRYQQEVDRIKEAVRAKNMARRAHSAQIAKPIRPGHYPASSPTAVHAIRGGGGSSSNSTHYQK</sequence>
<gene>
    <name type="primary">KIF5C</name>
    <name type="synonym">KIAA0531</name>
    <name type="synonym">NKHC2</name>
</gene>
<keyword id="KW-0025">Alternative splicing</keyword>
<keyword id="KW-0067">ATP-binding</keyword>
<keyword id="KW-0966">Cell projection</keyword>
<keyword id="KW-0175">Coiled coil</keyword>
<keyword id="KW-0963">Cytoplasm</keyword>
<keyword id="KW-0206">Cytoskeleton</keyword>
<keyword id="KW-0225">Disease variant</keyword>
<keyword id="KW-0378">Hydrolase</keyword>
<keyword id="KW-0493">Microtubule</keyword>
<keyword id="KW-0505">Motor protein</keyword>
<keyword id="KW-0547">Nucleotide-binding</keyword>
<keyword id="KW-1267">Proteomics identification</keyword>
<keyword id="KW-1185">Reference proteome</keyword>
<keyword id="KW-0813">Transport</keyword>
<comment type="function">
    <text evidence="1 2 8">Microtubule-associated force-producing protein that may play a role in organelle transport. Has ATPase activity (By similarity). Involved in synaptic transmission (PubMed:24812067). Mediates dendritic trafficking of mRNAs (By similarity). Required for anterograde axonal transportation of MAPK8IP3/JIP3 which is essential for MAPK8IP3/JIP3 function in axon elongation (By similarity).</text>
</comment>
<comment type="catalytic activity">
    <reaction evidence="2">
        <text>ATP + H2O = ADP + phosphate + H(+)</text>
        <dbReference type="Rhea" id="RHEA:13065"/>
        <dbReference type="ChEBI" id="CHEBI:15377"/>
        <dbReference type="ChEBI" id="CHEBI:15378"/>
        <dbReference type="ChEBI" id="CHEBI:30616"/>
        <dbReference type="ChEBI" id="CHEBI:43474"/>
        <dbReference type="ChEBI" id="CHEBI:456216"/>
    </reaction>
</comment>
<comment type="subunit">
    <text evidence="1 2 5">Oligomer composed of two heavy chains and two light chains. Interacts with GRIP1 and KLC3 (By similarity). Interacts with TRAK1 (PubMed:15644324). Interacts with ZFYVE27 (By similarity).</text>
</comment>
<comment type="interaction">
    <interactant intactId="EBI-717170">
        <id>O60282</id>
    </interactant>
    <interactant intactId="EBI-347804">
        <id>P68400</id>
        <label>CSNK2A1</label>
    </interactant>
    <organismsDiffer>false</organismsDiffer>
    <experiments>4</experiments>
</comment>
<comment type="interaction">
    <interactant intactId="EBI-717170">
        <id>O60282</id>
    </interactant>
    <interactant intactId="EBI-347451">
        <id>P19784</id>
        <label>CSNK2A2</label>
    </interactant>
    <organismsDiffer>false</organismsDiffer>
    <experiments>4</experiments>
</comment>
<comment type="interaction">
    <interactant intactId="EBI-717170">
        <id>O60282</id>
    </interactant>
    <interactant intactId="EBI-1396430">
        <id>Q8IXI2</id>
        <label>RHOT1</label>
    </interactant>
    <organismsDiffer>false</organismsDiffer>
    <experiments>2</experiments>
</comment>
<comment type="interaction">
    <interactant intactId="EBI-12334027">
        <id>O60282-2</id>
    </interactant>
    <interactant intactId="EBI-16439278">
        <id>Q6FHY5</id>
        <label>MEOX2</label>
    </interactant>
    <organismsDiffer>false</organismsDiffer>
    <experiments>3</experiments>
</comment>
<comment type="subcellular location">
    <subcellularLocation>
        <location evidence="11">Cytoplasm</location>
        <location evidence="11">Cytoskeleton</location>
    </subcellularLocation>
    <subcellularLocation>
        <location evidence="8">Cell projection</location>
        <location evidence="8">Dendrite</location>
    </subcellularLocation>
    <text evidence="8">Abundant in distal regions of dendrites.</text>
</comment>
<comment type="alternative products">
    <event type="alternative splicing"/>
    <isoform>
        <id>O60282-1</id>
        <name>1</name>
        <sequence type="displayed"/>
    </isoform>
    <isoform>
        <id>O60282-2</id>
        <name>2</name>
        <sequence type="described" ref="VSP_035715 VSP_035716"/>
    </isoform>
</comment>
<comment type="tissue specificity">
    <text>Highest expression in brain, prostate and testis, and moderate expression in kidney, small intestine and ovary.</text>
</comment>
<comment type="domain">
    <text>Composed of three structural domains: a large globular N-terminal domain which is responsible for the motor activity of kinesin (it hydrolyzes ATP and binds microtubule), a central alpha-helical coiled coil domain that mediates the heavy chain dimerization; and a small globular C-terminal domain which interacts with other proteins (such as the kinesin light chains), vesicles and membranous organelles.</text>
</comment>
<comment type="disease" evidence="6 7 8 9">
    <disease id="DI-03883">
        <name>Cortical dysplasia, complex, with other brain malformations 2</name>
        <acronym>CDCBM2</acronym>
        <description>A disorder of aberrant neuronal migration and disturbed axonal guidance. Clinical features include intrauterine growth retardation, fetal akinesia, seizures, microcephaly, lack of psychomotor development, and arthrogryposis. Brain imaging shows malformations of cortical development, including polymicrogyria, gyral simplification, and thin corpus callosum.</description>
        <dbReference type="MIM" id="615282"/>
    </disease>
    <text>The disease is caused by variants affecting the gene represented in this entry.</text>
</comment>
<comment type="similarity">
    <text evidence="3">Belongs to the TRAFAC class myosin-kinesin ATPase superfamily. Kinesin family. Kinesin subfamily.</text>
</comment>
<comment type="sequence caution" evidence="11">
    <conflict type="erroneous initiation">
        <sequence resource="EMBL-CDS" id="BAA25457"/>
    </conflict>
    <text>Extended N-terminus.</text>
</comment>
<dbReference type="EC" id="3.6.4.-" evidence="2"/>
<dbReference type="EMBL" id="AB011103">
    <property type="protein sequence ID" value="BAA25457.2"/>
    <property type="status" value="ALT_INIT"/>
    <property type="molecule type" value="mRNA"/>
</dbReference>
<dbReference type="EMBL" id="AC105402">
    <property type="status" value="NOT_ANNOTATED_CDS"/>
    <property type="molecule type" value="Genomic_DNA"/>
</dbReference>
<dbReference type="EMBL" id="AC108512">
    <property type="status" value="NOT_ANNOTATED_CDS"/>
    <property type="molecule type" value="Genomic_DNA"/>
</dbReference>
<dbReference type="EMBL" id="AC144443">
    <property type="status" value="NOT_ANNOTATED_CDS"/>
    <property type="molecule type" value="Genomic_DNA"/>
</dbReference>
<dbReference type="EMBL" id="AC144611">
    <property type="status" value="NOT_ANNOTATED_CDS"/>
    <property type="molecule type" value="Genomic_DNA"/>
</dbReference>
<dbReference type="EMBL" id="BC110287">
    <property type="protein sequence ID" value="AAI10288.1"/>
    <property type="molecule type" value="mRNA"/>
</dbReference>
<dbReference type="EMBL" id="AF010146">
    <property type="protein sequence ID" value="AAD01436.1"/>
    <property type="molecule type" value="mRNA"/>
</dbReference>
<dbReference type="CCDS" id="CCDS74586.1">
    <molecule id="O60282-1"/>
</dbReference>
<dbReference type="RefSeq" id="NP_004513.1">
    <molecule id="O60282-1"/>
    <property type="nucleotide sequence ID" value="NM_004522.3"/>
</dbReference>
<dbReference type="RefSeq" id="XP_011509459.1">
    <molecule id="O60282-2"/>
    <property type="nucleotide sequence ID" value="XM_011511157.3"/>
</dbReference>
<dbReference type="RefSeq" id="XP_016859551.1">
    <molecule id="O60282-1"/>
    <property type="nucleotide sequence ID" value="XM_017004062.2"/>
</dbReference>
<dbReference type="RefSeq" id="XP_047300214.1">
    <molecule id="O60282-2"/>
    <property type="nucleotide sequence ID" value="XM_047444258.1"/>
</dbReference>
<dbReference type="RefSeq" id="XP_054197932.1">
    <molecule id="O60282-1"/>
    <property type="nucleotide sequence ID" value="XM_054341957.1"/>
</dbReference>
<dbReference type="RefSeq" id="XP_054197933.1">
    <molecule id="O60282-2"/>
    <property type="nucleotide sequence ID" value="XM_054341958.1"/>
</dbReference>
<dbReference type="RefSeq" id="XP_054197934.1">
    <molecule id="O60282-2"/>
    <property type="nucleotide sequence ID" value="XM_054341959.1"/>
</dbReference>
<dbReference type="SMR" id="O60282"/>
<dbReference type="BioGRID" id="110001">
    <property type="interactions" value="73"/>
</dbReference>
<dbReference type="CORUM" id="O60282"/>
<dbReference type="FunCoup" id="O60282">
    <property type="interactions" value="1051"/>
</dbReference>
<dbReference type="IntAct" id="O60282">
    <property type="interactions" value="60"/>
</dbReference>
<dbReference type="MINT" id="O60282"/>
<dbReference type="STRING" id="9606.ENSP00000393379"/>
<dbReference type="BindingDB" id="O60282"/>
<dbReference type="ChEMBL" id="CHEMBL2029194"/>
<dbReference type="GlyGen" id="O60282">
    <property type="glycosylation" value="1 site, 1 O-linked glycan (1 site)"/>
</dbReference>
<dbReference type="iPTMnet" id="O60282"/>
<dbReference type="PhosphoSitePlus" id="O60282"/>
<dbReference type="SwissPalm" id="O60282"/>
<dbReference type="BioMuta" id="KIF5C"/>
<dbReference type="jPOST" id="O60282"/>
<dbReference type="MassIVE" id="O60282"/>
<dbReference type="PaxDb" id="9606-ENSP00000393379"/>
<dbReference type="PeptideAtlas" id="O60282"/>
<dbReference type="ProteomicsDB" id="49311">
    <molecule id="O60282-1"/>
</dbReference>
<dbReference type="ProteomicsDB" id="49312">
    <molecule id="O60282-2"/>
</dbReference>
<dbReference type="Pumba" id="O60282"/>
<dbReference type="Antibodypedia" id="33631">
    <property type="antibodies" value="141 antibodies from 21 providers"/>
</dbReference>
<dbReference type="DNASU" id="3800"/>
<dbReference type="Ensembl" id="ENST00000435030.6">
    <molecule id="O60282-1"/>
    <property type="protein sequence ID" value="ENSP00000393379.1"/>
    <property type="gene ID" value="ENSG00000168280.18"/>
</dbReference>
<dbReference type="Ensembl" id="ENST00000676677.1">
    <molecule id="O60282-2"/>
    <property type="protein sequence ID" value="ENSP00000503401.1"/>
    <property type="gene ID" value="ENSG00000168280.18"/>
</dbReference>
<dbReference type="Ensembl" id="ENST00000677891.1">
    <molecule id="O60282-1"/>
    <property type="protein sequence ID" value="ENSP00000503013.1"/>
    <property type="gene ID" value="ENSG00000168280.18"/>
</dbReference>
<dbReference type="Ensembl" id="ENST00000679129.1">
    <molecule id="O60282-2"/>
    <property type="protein sequence ID" value="ENSP00000504291.1"/>
    <property type="gene ID" value="ENSG00000168280.18"/>
</dbReference>
<dbReference type="GeneID" id="3800"/>
<dbReference type="KEGG" id="hsa:3800"/>
<dbReference type="MANE-Select" id="ENST00000435030.6">
    <property type="protein sequence ID" value="ENSP00000393379.1"/>
    <property type="RefSeq nucleotide sequence ID" value="NM_004522.3"/>
    <property type="RefSeq protein sequence ID" value="NP_004513.1"/>
</dbReference>
<dbReference type="UCSC" id="uc010zbu.3">
    <molecule id="O60282-1"/>
    <property type="organism name" value="human"/>
</dbReference>
<dbReference type="AGR" id="HGNC:6325"/>
<dbReference type="CTD" id="3800"/>
<dbReference type="DisGeNET" id="3800"/>
<dbReference type="GeneCards" id="KIF5C"/>
<dbReference type="HGNC" id="HGNC:6325">
    <property type="gene designation" value="KIF5C"/>
</dbReference>
<dbReference type="HPA" id="ENSG00000168280">
    <property type="expression patterns" value="Tissue enriched (brain)"/>
</dbReference>
<dbReference type="MalaCards" id="KIF5C"/>
<dbReference type="MIM" id="604593">
    <property type="type" value="gene"/>
</dbReference>
<dbReference type="MIM" id="615282">
    <property type="type" value="phenotype"/>
</dbReference>
<dbReference type="neXtProt" id="NX_O60282"/>
<dbReference type="OpenTargets" id="ENSG00000168280"/>
<dbReference type="PharmGKB" id="PA30109"/>
<dbReference type="VEuPathDB" id="HostDB:ENSG00000168280"/>
<dbReference type="eggNOG" id="KOG0240">
    <property type="taxonomic scope" value="Eukaryota"/>
</dbReference>
<dbReference type="GeneTree" id="ENSGT00940000158539"/>
<dbReference type="HOGENOM" id="CLU_001485_11_1_1"/>
<dbReference type="InParanoid" id="O60282"/>
<dbReference type="OMA" id="QKSAEPY"/>
<dbReference type="OrthoDB" id="3176171at2759"/>
<dbReference type="PAN-GO" id="O60282">
    <property type="GO annotations" value="8 GO annotations based on evolutionary models"/>
</dbReference>
<dbReference type="PhylomeDB" id="O60282"/>
<dbReference type="TreeFam" id="TF105225"/>
<dbReference type="PathwayCommons" id="O60282"/>
<dbReference type="Reactome" id="R-HSA-264876">
    <property type="pathway name" value="Insulin processing"/>
</dbReference>
<dbReference type="SignaLink" id="O60282"/>
<dbReference type="SIGNOR" id="O60282"/>
<dbReference type="BioGRID-ORCS" id="3800">
    <property type="hits" value="7 hits in 389 CRISPR screens"/>
</dbReference>
<dbReference type="CD-CODE" id="91857CE7">
    <property type="entry name" value="Nucleolus"/>
</dbReference>
<dbReference type="CD-CODE" id="FB4E32DD">
    <property type="entry name" value="Presynaptic clusters and postsynaptic densities"/>
</dbReference>
<dbReference type="ChiTaRS" id="KIF5C">
    <property type="organism name" value="human"/>
</dbReference>
<dbReference type="GeneWiki" id="KIF5C"/>
<dbReference type="GenomeRNAi" id="3800"/>
<dbReference type="Pharos" id="O60282">
    <property type="development level" value="Tbio"/>
</dbReference>
<dbReference type="PRO" id="PR:O60282"/>
<dbReference type="Proteomes" id="UP000005640">
    <property type="component" value="Chromosome 2"/>
</dbReference>
<dbReference type="RNAct" id="O60282">
    <property type="molecule type" value="protein"/>
</dbReference>
<dbReference type="Bgee" id="ENSG00000168280">
    <property type="expression patterns" value="Expressed in Brodmann (1909) area 10 and 162 other cell types or tissues"/>
</dbReference>
<dbReference type="GO" id="GO:1904115">
    <property type="term" value="C:axon cytoplasm"/>
    <property type="evidence" value="ECO:0007669"/>
    <property type="project" value="GOC"/>
</dbReference>
<dbReference type="GO" id="GO:0044295">
    <property type="term" value="C:axonal growth cone"/>
    <property type="evidence" value="ECO:0000250"/>
    <property type="project" value="ARUK-UCL"/>
</dbReference>
<dbReference type="GO" id="GO:0035253">
    <property type="term" value="C:ciliary rootlet"/>
    <property type="evidence" value="ECO:0007669"/>
    <property type="project" value="Ensembl"/>
</dbReference>
<dbReference type="GO" id="GO:0005737">
    <property type="term" value="C:cytoplasm"/>
    <property type="evidence" value="ECO:0000318"/>
    <property type="project" value="GO_Central"/>
</dbReference>
<dbReference type="GO" id="GO:0032839">
    <property type="term" value="C:dendrite cytoplasm"/>
    <property type="evidence" value="ECO:0007669"/>
    <property type="project" value="GOC"/>
</dbReference>
<dbReference type="GO" id="GO:0150034">
    <property type="term" value="C:distal axon"/>
    <property type="evidence" value="ECO:0000250"/>
    <property type="project" value="ARUK-UCL"/>
</dbReference>
<dbReference type="GO" id="GO:0098982">
    <property type="term" value="C:GABA-ergic synapse"/>
    <property type="evidence" value="ECO:0007669"/>
    <property type="project" value="Ensembl"/>
</dbReference>
<dbReference type="GO" id="GO:0005871">
    <property type="term" value="C:kinesin complex"/>
    <property type="evidence" value="ECO:0000318"/>
    <property type="project" value="GO_Central"/>
</dbReference>
<dbReference type="GO" id="GO:0005874">
    <property type="term" value="C:microtubule"/>
    <property type="evidence" value="ECO:0000318"/>
    <property type="project" value="GO_Central"/>
</dbReference>
<dbReference type="GO" id="GO:0043025">
    <property type="term" value="C:neuronal cell body"/>
    <property type="evidence" value="ECO:0000250"/>
    <property type="project" value="ARUK-UCL"/>
</dbReference>
<dbReference type="GO" id="GO:0099524">
    <property type="term" value="C:postsynaptic cytosol"/>
    <property type="evidence" value="ECO:0007669"/>
    <property type="project" value="Ensembl"/>
</dbReference>
<dbReference type="GO" id="GO:0034190">
    <property type="term" value="F:apolipoprotein receptor binding"/>
    <property type="evidence" value="ECO:0007669"/>
    <property type="project" value="Ensembl"/>
</dbReference>
<dbReference type="GO" id="GO:0005524">
    <property type="term" value="F:ATP binding"/>
    <property type="evidence" value="ECO:0007669"/>
    <property type="project" value="UniProtKB-KW"/>
</dbReference>
<dbReference type="GO" id="GO:0016887">
    <property type="term" value="F:ATP hydrolysis activity"/>
    <property type="evidence" value="ECO:0000318"/>
    <property type="project" value="GO_Central"/>
</dbReference>
<dbReference type="GO" id="GO:0008017">
    <property type="term" value="F:microtubule binding"/>
    <property type="evidence" value="ECO:0000318"/>
    <property type="project" value="GO_Central"/>
</dbReference>
<dbReference type="GO" id="GO:0003777">
    <property type="term" value="F:microtubule motor activity"/>
    <property type="evidence" value="ECO:0000304"/>
    <property type="project" value="ProtInc"/>
</dbReference>
<dbReference type="GO" id="GO:0008574">
    <property type="term" value="F:plus-end-directed microtubule motor activity"/>
    <property type="evidence" value="ECO:0000318"/>
    <property type="project" value="GO_Central"/>
</dbReference>
<dbReference type="GO" id="GO:0099641">
    <property type="term" value="P:anterograde axonal protein transport"/>
    <property type="evidence" value="ECO:0000250"/>
    <property type="project" value="UniProtKB"/>
</dbReference>
<dbReference type="GO" id="GO:0098964">
    <property type="term" value="P:anterograde dendritic transport of messenger ribonucleoprotein complex"/>
    <property type="evidence" value="ECO:0007669"/>
    <property type="project" value="Ensembl"/>
</dbReference>
<dbReference type="GO" id="GO:0098971">
    <property type="term" value="P:anterograde dendritic transport of neurotransmitter receptor complex"/>
    <property type="evidence" value="ECO:0000318"/>
    <property type="project" value="GO_Central"/>
</dbReference>
<dbReference type="GO" id="GO:0007411">
    <property type="term" value="P:axon guidance"/>
    <property type="evidence" value="ECO:0000318"/>
    <property type="project" value="GO_Central"/>
</dbReference>
<dbReference type="GO" id="GO:0008298">
    <property type="term" value="P:intracellular mRNA localization"/>
    <property type="evidence" value="ECO:0007669"/>
    <property type="project" value="Ensembl"/>
</dbReference>
<dbReference type="GO" id="GO:0008045">
    <property type="term" value="P:motor neuron axon guidance"/>
    <property type="evidence" value="ECO:0007669"/>
    <property type="project" value="Ensembl"/>
</dbReference>
<dbReference type="GO" id="GO:0051028">
    <property type="term" value="P:mRNA transport"/>
    <property type="evidence" value="ECO:0000250"/>
    <property type="project" value="UniProtKB"/>
</dbReference>
<dbReference type="GO" id="GO:0006996">
    <property type="term" value="P:organelle organization"/>
    <property type="evidence" value="ECO:0000304"/>
    <property type="project" value="ProtInc"/>
</dbReference>
<dbReference type="GO" id="GO:0048489">
    <property type="term" value="P:synaptic vesicle transport"/>
    <property type="evidence" value="ECO:0000318"/>
    <property type="project" value="GO_Central"/>
</dbReference>
<dbReference type="CDD" id="cd23649">
    <property type="entry name" value="Khc_CBD_cc"/>
    <property type="match status" value="1"/>
</dbReference>
<dbReference type="CDD" id="cd01369">
    <property type="entry name" value="KISc_KHC_KIF5"/>
    <property type="match status" value="1"/>
</dbReference>
<dbReference type="FunFam" id="3.40.850.10:FF:000009">
    <property type="entry name" value="Kinesin-like protein"/>
    <property type="match status" value="1"/>
</dbReference>
<dbReference type="Gene3D" id="6.10.250.1590">
    <property type="match status" value="1"/>
</dbReference>
<dbReference type="Gene3D" id="3.40.850.10">
    <property type="entry name" value="Kinesin motor domain"/>
    <property type="match status" value="1"/>
</dbReference>
<dbReference type="InterPro" id="IPR027640">
    <property type="entry name" value="Kinesin-like_fam"/>
</dbReference>
<dbReference type="InterPro" id="IPR019821">
    <property type="entry name" value="Kinesin_motor_CS"/>
</dbReference>
<dbReference type="InterPro" id="IPR001752">
    <property type="entry name" value="Kinesin_motor_dom"/>
</dbReference>
<dbReference type="InterPro" id="IPR036961">
    <property type="entry name" value="Kinesin_motor_dom_sf"/>
</dbReference>
<dbReference type="InterPro" id="IPR027417">
    <property type="entry name" value="P-loop_NTPase"/>
</dbReference>
<dbReference type="PANTHER" id="PTHR47968">
    <property type="entry name" value="CENTROMERE PROTEIN E"/>
    <property type="match status" value="1"/>
</dbReference>
<dbReference type="PANTHER" id="PTHR47968:SF70">
    <property type="entry name" value="KINESIN HEAVY CHAIN ISOFORM 5C"/>
    <property type="match status" value="1"/>
</dbReference>
<dbReference type="Pfam" id="PF00225">
    <property type="entry name" value="Kinesin"/>
    <property type="match status" value="1"/>
</dbReference>
<dbReference type="PRINTS" id="PR00380">
    <property type="entry name" value="KINESINHEAVY"/>
</dbReference>
<dbReference type="SMART" id="SM00129">
    <property type="entry name" value="KISc"/>
    <property type="match status" value="1"/>
</dbReference>
<dbReference type="SUPFAM" id="SSF52540">
    <property type="entry name" value="P-loop containing nucleoside triphosphate hydrolases"/>
    <property type="match status" value="1"/>
</dbReference>
<dbReference type="PROSITE" id="PS00411">
    <property type="entry name" value="KINESIN_MOTOR_1"/>
    <property type="match status" value="1"/>
</dbReference>
<dbReference type="PROSITE" id="PS50067">
    <property type="entry name" value="KINESIN_MOTOR_2"/>
    <property type="match status" value="1"/>
</dbReference>
<name>KIF5C_HUMAN</name>
<accession>O60282</accession>
<accession>O95079</accession>
<accession>Q2YDC5</accession>